<protein>
    <recommendedName>
        <fullName evidence="1">Orotidine 5'-phosphate decarboxylase</fullName>
        <ecNumber evidence="1">4.1.1.23</ecNumber>
    </recommendedName>
    <alternativeName>
        <fullName evidence="1">OMP decarboxylase</fullName>
        <shortName evidence="1">OMPDCase</shortName>
        <shortName evidence="1">OMPdecase</shortName>
    </alternativeName>
</protein>
<proteinExistence type="inferred from homology"/>
<accession>Q884R0</accession>
<gene>
    <name evidence="1" type="primary">pyrF</name>
    <name type="ordered locus">PSPTO_2028</name>
</gene>
<dbReference type="EC" id="4.1.1.23" evidence="1"/>
<dbReference type="EMBL" id="AE016853">
    <property type="protein sequence ID" value="AAO55546.1"/>
    <property type="status" value="ALT_INIT"/>
    <property type="molecule type" value="Genomic_DNA"/>
</dbReference>
<dbReference type="RefSeq" id="NP_791851.1">
    <property type="nucleotide sequence ID" value="NC_004578.1"/>
</dbReference>
<dbReference type="RefSeq" id="WP_024667462.1">
    <property type="nucleotide sequence ID" value="NC_004578.1"/>
</dbReference>
<dbReference type="SMR" id="Q884R0"/>
<dbReference type="STRING" id="223283.PSPTO_2028"/>
<dbReference type="GeneID" id="1183673"/>
<dbReference type="KEGG" id="pst:PSPTO_2028"/>
<dbReference type="PATRIC" id="fig|223283.9.peg.2058"/>
<dbReference type="eggNOG" id="COG0284">
    <property type="taxonomic scope" value="Bacteria"/>
</dbReference>
<dbReference type="HOGENOM" id="CLU_067069_0_1_6"/>
<dbReference type="OrthoDB" id="9806203at2"/>
<dbReference type="UniPathway" id="UPA00070">
    <property type="reaction ID" value="UER00120"/>
</dbReference>
<dbReference type="Proteomes" id="UP000002515">
    <property type="component" value="Chromosome"/>
</dbReference>
<dbReference type="GO" id="GO:0005829">
    <property type="term" value="C:cytosol"/>
    <property type="evidence" value="ECO:0007669"/>
    <property type="project" value="TreeGrafter"/>
</dbReference>
<dbReference type="GO" id="GO:0004590">
    <property type="term" value="F:orotidine-5'-phosphate decarboxylase activity"/>
    <property type="evidence" value="ECO:0007669"/>
    <property type="project" value="UniProtKB-UniRule"/>
</dbReference>
<dbReference type="GO" id="GO:0006207">
    <property type="term" value="P:'de novo' pyrimidine nucleobase biosynthetic process"/>
    <property type="evidence" value="ECO:0007669"/>
    <property type="project" value="InterPro"/>
</dbReference>
<dbReference type="GO" id="GO:0044205">
    <property type="term" value="P:'de novo' UMP biosynthetic process"/>
    <property type="evidence" value="ECO:0007669"/>
    <property type="project" value="UniProtKB-UniRule"/>
</dbReference>
<dbReference type="CDD" id="cd04725">
    <property type="entry name" value="OMP_decarboxylase_like"/>
    <property type="match status" value="1"/>
</dbReference>
<dbReference type="FunFam" id="3.20.20.70:FF:000015">
    <property type="entry name" value="Orotidine 5'-phosphate decarboxylase"/>
    <property type="match status" value="1"/>
</dbReference>
<dbReference type="Gene3D" id="3.20.20.70">
    <property type="entry name" value="Aldolase class I"/>
    <property type="match status" value="1"/>
</dbReference>
<dbReference type="HAMAP" id="MF_01200_B">
    <property type="entry name" value="OMPdecase_type1_B"/>
    <property type="match status" value="1"/>
</dbReference>
<dbReference type="InterPro" id="IPR013785">
    <property type="entry name" value="Aldolase_TIM"/>
</dbReference>
<dbReference type="InterPro" id="IPR014732">
    <property type="entry name" value="OMPdecase"/>
</dbReference>
<dbReference type="InterPro" id="IPR018089">
    <property type="entry name" value="OMPdecase_AS"/>
</dbReference>
<dbReference type="InterPro" id="IPR047596">
    <property type="entry name" value="OMPdecase_bac"/>
</dbReference>
<dbReference type="InterPro" id="IPR001754">
    <property type="entry name" value="OMPdeCOase_dom"/>
</dbReference>
<dbReference type="InterPro" id="IPR011060">
    <property type="entry name" value="RibuloseP-bd_barrel"/>
</dbReference>
<dbReference type="NCBIfam" id="NF001273">
    <property type="entry name" value="PRK00230.1"/>
    <property type="match status" value="1"/>
</dbReference>
<dbReference type="NCBIfam" id="TIGR01740">
    <property type="entry name" value="pyrF"/>
    <property type="match status" value="1"/>
</dbReference>
<dbReference type="PANTHER" id="PTHR32119">
    <property type="entry name" value="OROTIDINE 5'-PHOSPHATE DECARBOXYLASE"/>
    <property type="match status" value="1"/>
</dbReference>
<dbReference type="PANTHER" id="PTHR32119:SF2">
    <property type="entry name" value="OROTIDINE 5'-PHOSPHATE DECARBOXYLASE"/>
    <property type="match status" value="1"/>
</dbReference>
<dbReference type="Pfam" id="PF00215">
    <property type="entry name" value="OMPdecase"/>
    <property type="match status" value="1"/>
</dbReference>
<dbReference type="SMART" id="SM00934">
    <property type="entry name" value="OMPdecase"/>
    <property type="match status" value="1"/>
</dbReference>
<dbReference type="SUPFAM" id="SSF51366">
    <property type="entry name" value="Ribulose-phoshate binding barrel"/>
    <property type="match status" value="1"/>
</dbReference>
<dbReference type="PROSITE" id="PS00156">
    <property type="entry name" value="OMPDECASE"/>
    <property type="match status" value="1"/>
</dbReference>
<organism>
    <name type="scientific">Pseudomonas syringae pv. tomato (strain ATCC BAA-871 / DC3000)</name>
    <dbReference type="NCBI Taxonomy" id="223283"/>
    <lineage>
        <taxon>Bacteria</taxon>
        <taxon>Pseudomonadati</taxon>
        <taxon>Pseudomonadota</taxon>
        <taxon>Gammaproteobacteria</taxon>
        <taxon>Pseudomonadales</taxon>
        <taxon>Pseudomonadaceae</taxon>
        <taxon>Pseudomonas</taxon>
    </lineage>
</organism>
<sequence>MSACQTPVIVALDFPTREAAMRLADQLDPKLCRVKVGKELFTSCASDIVEALRGKGFDVFLDLKFHDIPNTTAMAVKAAAEMGVWMVNVHCSGGLRMMAACREVLEQRTGPQPLLIGVTVLTSMEREDLAGIGLDIDPQVQVLRLAALAEKAGMDGLVCSALEAQALKAAHPSLQLVTPGIRPAGSAQDDQRRILTPRQALDAGSDYLVIGRPISQAADPAKALAAVVAELA</sequence>
<reference key="1">
    <citation type="journal article" date="2003" name="Proc. Natl. Acad. Sci. U.S.A.">
        <title>The complete genome sequence of the Arabidopsis and tomato pathogen Pseudomonas syringae pv. tomato DC3000.</title>
        <authorList>
            <person name="Buell C.R."/>
            <person name="Joardar V."/>
            <person name="Lindeberg M."/>
            <person name="Selengut J."/>
            <person name="Paulsen I.T."/>
            <person name="Gwinn M.L."/>
            <person name="Dodson R.J."/>
            <person name="DeBoy R.T."/>
            <person name="Durkin A.S."/>
            <person name="Kolonay J.F."/>
            <person name="Madupu R."/>
            <person name="Daugherty S.C."/>
            <person name="Brinkac L.M."/>
            <person name="Beanan M.J."/>
            <person name="Haft D.H."/>
            <person name="Nelson W.C."/>
            <person name="Davidsen T.M."/>
            <person name="Zafar N."/>
            <person name="Zhou L."/>
            <person name="Liu J."/>
            <person name="Yuan Q."/>
            <person name="Khouri H.M."/>
            <person name="Fedorova N.B."/>
            <person name="Tran B."/>
            <person name="Russell D."/>
            <person name="Berry K.J."/>
            <person name="Utterback T.R."/>
            <person name="Van Aken S.E."/>
            <person name="Feldblyum T.V."/>
            <person name="D'Ascenzo M."/>
            <person name="Deng W.-L."/>
            <person name="Ramos A.R."/>
            <person name="Alfano J.R."/>
            <person name="Cartinhour S."/>
            <person name="Chatterjee A.K."/>
            <person name="Delaney T.P."/>
            <person name="Lazarowitz S.G."/>
            <person name="Martin G.B."/>
            <person name="Schneider D.J."/>
            <person name="Tang X."/>
            <person name="Bender C.L."/>
            <person name="White O."/>
            <person name="Fraser C.M."/>
            <person name="Collmer A."/>
        </authorList>
    </citation>
    <scope>NUCLEOTIDE SEQUENCE [LARGE SCALE GENOMIC DNA]</scope>
    <source>
        <strain>ATCC BAA-871 / DC3000</strain>
    </source>
</reference>
<evidence type="ECO:0000255" key="1">
    <source>
        <dbReference type="HAMAP-Rule" id="MF_01200"/>
    </source>
</evidence>
<evidence type="ECO:0000305" key="2"/>
<comment type="function">
    <text evidence="1">Catalyzes the decarboxylation of orotidine 5'-monophosphate (OMP) to uridine 5'-monophosphate (UMP).</text>
</comment>
<comment type="catalytic activity">
    <reaction evidence="1">
        <text>orotidine 5'-phosphate + H(+) = UMP + CO2</text>
        <dbReference type="Rhea" id="RHEA:11596"/>
        <dbReference type="ChEBI" id="CHEBI:15378"/>
        <dbReference type="ChEBI" id="CHEBI:16526"/>
        <dbReference type="ChEBI" id="CHEBI:57538"/>
        <dbReference type="ChEBI" id="CHEBI:57865"/>
        <dbReference type="EC" id="4.1.1.23"/>
    </reaction>
</comment>
<comment type="pathway">
    <text evidence="1">Pyrimidine metabolism; UMP biosynthesis via de novo pathway; UMP from orotate: step 2/2.</text>
</comment>
<comment type="subunit">
    <text evidence="1">Homodimer.</text>
</comment>
<comment type="similarity">
    <text evidence="1">Belongs to the OMP decarboxylase family. Type 1 subfamily.</text>
</comment>
<comment type="sequence caution" evidence="2">
    <conflict type="erroneous initiation">
        <sequence resource="EMBL-CDS" id="AAO55546"/>
    </conflict>
</comment>
<keyword id="KW-0210">Decarboxylase</keyword>
<keyword id="KW-0456">Lyase</keyword>
<keyword id="KW-0665">Pyrimidine biosynthesis</keyword>
<keyword id="KW-1185">Reference proteome</keyword>
<feature type="chain" id="PRO_0000241893" description="Orotidine 5'-phosphate decarboxylase">
    <location>
        <begin position="1"/>
        <end position="232"/>
    </location>
</feature>
<feature type="active site" description="Proton donor" evidence="1">
    <location>
        <position position="64"/>
    </location>
</feature>
<feature type="binding site" evidence="1">
    <location>
        <position position="13"/>
    </location>
    <ligand>
        <name>substrate</name>
    </ligand>
</feature>
<feature type="binding site" evidence="1">
    <location>
        <position position="35"/>
    </location>
    <ligand>
        <name>substrate</name>
    </ligand>
</feature>
<feature type="binding site" evidence="1">
    <location>
        <begin position="62"/>
        <end position="71"/>
    </location>
    <ligand>
        <name>substrate</name>
    </ligand>
</feature>
<feature type="binding site" evidence="1">
    <location>
        <position position="122"/>
    </location>
    <ligand>
        <name>substrate</name>
    </ligand>
</feature>
<feature type="binding site" evidence="1">
    <location>
        <position position="182"/>
    </location>
    <ligand>
        <name>substrate</name>
    </ligand>
</feature>
<feature type="binding site" evidence="1">
    <location>
        <position position="191"/>
    </location>
    <ligand>
        <name>substrate</name>
    </ligand>
</feature>
<feature type="binding site" evidence="1">
    <location>
        <position position="211"/>
    </location>
    <ligand>
        <name>substrate</name>
    </ligand>
</feature>
<feature type="binding site" evidence="1">
    <location>
        <position position="212"/>
    </location>
    <ligand>
        <name>substrate</name>
    </ligand>
</feature>
<name>PYRF_PSESM</name>